<feature type="chain" id="PRO_1000134408" description="Protein TusC">
    <location>
        <begin position="1"/>
        <end position="119"/>
    </location>
</feature>
<dbReference type="EMBL" id="FM180568">
    <property type="protein sequence ID" value="CAS11141.1"/>
    <property type="molecule type" value="Genomic_DNA"/>
</dbReference>
<dbReference type="RefSeq" id="WP_000820730.1">
    <property type="nucleotide sequence ID" value="NC_011601.1"/>
</dbReference>
<dbReference type="SMR" id="B7UK54"/>
<dbReference type="KEGG" id="ecg:E2348C_3593"/>
<dbReference type="HOGENOM" id="CLU_155943_1_0_6"/>
<dbReference type="Proteomes" id="UP000008205">
    <property type="component" value="Chromosome"/>
</dbReference>
<dbReference type="GO" id="GO:0005737">
    <property type="term" value="C:cytoplasm"/>
    <property type="evidence" value="ECO:0007669"/>
    <property type="project" value="UniProtKB-SubCell"/>
</dbReference>
<dbReference type="GO" id="GO:0008033">
    <property type="term" value="P:tRNA processing"/>
    <property type="evidence" value="ECO:0007669"/>
    <property type="project" value="UniProtKB-UniRule"/>
</dbReference>
<dbReference type="FunFam" id="3.40.1260.10:FF:000004">
    <property type="entry name" value="Sulfurtransferase TusC"/>
    <property type="match status" value="1"/>
</dbReference>
<dbReference type="Gene3D" id="3.40.1260.10">
    <property type="entry name" value="DsrEFH-like"/>
    <property type="match status" value="1"/>
</dbReference>
<dbReference type="HAMAP" id="MF_00389">
    <property type="entry name" value="Thiourid_synth_C"/>
    <property type="match status" value="1"/>
</dbReference>
<dbReference type="InterPro" id="IPR027396">
    <property type="entry name" value="DsrEFH-like"/>
</dbReference>
<dbReference type="InterPro" id="IPR003787">
    <property type="entry name" value="Sulphur_relay_DsrE/F-like"/>
</dbReference>
<dbReference type="InterPro" id="IPR037450">
    <property type="entry name" value="Sulphur_relay_TusC"/>
</dbReference>
<dbReference type="InterPro" id="IPR017462">
    <property type="entry name" value="Sulphur_relay_TusC/DsrF"/>
</dbReference>
<dbReference type="NCBIfam" id="NF001238">
    <property type="entry name" value="PRK00211.1"/>
    <property type="match status" value="1"/>
</dbReference>
<dbReference type="NCBIfam" id="TIGR03010">
    <property type="entry name" value="sulf_tusC_dsrF"/>
    <property type="match status" value="1"/>
</dbReference>
<dbReference type="PANTHER" id="PTHR38780">
    <property type="entry name" value="PROTEIN TUSC"/>
    <property type="match status" value="1"/>
</dbReference>
<dbReference type="PANTHER" id="PTHR38780:SF1">
    <property type="entry name" value="PROTEIN TUSC"/>
    <property type="match status" value="1"/>
</dbReference>
<dbReference type="Pfam" id="PF02635">
    <property type="entry name" value="DsrE"/>
    <property type="match status" value="1"/>
</dbReference>
<dbReference type="SUPFAM" id="SSF75169">
    <property type="entry name" value="DsrEFH-like"/>
    <property type="match status" value="1"/>
</dbReference>
<reference key="1">
    <citation type="journal article" date="2009" name="J. Bacteriol.">
        <title>Complete genome sequence and comparative genome analysis of enteropathogenic Escherichia coli O127:H6 strain E2348/69.</title>
        <authorList>
            <person name="Iguchi A."/>
            <person name="Thomson N.R."/>
            <person name="Ogura Y."/>
            <person name="Saunders D."/>
            <person name="Ooka T."/>
            <person name="Henderson I.R."/>
            <person name="Harris D."/>
            <person name="Asadulghani M."/>
            <person name="Kurokawa K."/>
            <person name="Dean P."/>
            <person name="Kenny B."/>
            <person name="Quail M.A."/>
            <person name="Thurston S."/>
            <person name="Dougan G."/>
            <person name="Hayashi T."/>
            <person name="Parkhill J."/>
            <person name="Frankel G."/>
        </authorList>
    </citation>
    <scope>NUCLEOTIDE SEQUENCE [LARGE SCALE GENOMIC DNA]</scope>
    <source>
        <strain>E2348/69 / EPEC</strain>
    </source>
</reference>
<keyword id="KW-0963">Cytoplasm</keyword>
<keyword id="KW-1185">Reference proteome</keyword>
<keyword id="KW-0819">tRNA processing</keyword>
<evidence type="ECO:0000255" key="1">
    <source>
        <dbReference type="HAMAP-Rule" id="MF_00389"/>
    </source>
</evidence>
<protein>
    <recommendedName>
        <fullName evidence="1">Protein TusC</fullName>
    </recommendedName>
    <alternativeName>
        <fullName evidence="1">tRNA 2-thiouridine synthesizing protein C</fullName>
    </alternativeName>
</protein>
<name>TUSC_ECO27</name>
<proteinExistence type="inferred from homology"/>
<comment type="function">
    <text evidence="1">Part of a sulfur-relay system required for 2-thiolation of 5-methylaminomethyl-2-thiouridine (mnm(5)s(2)U) at tRNA wobble positions.</text>
</comment>
<comment type="subunit">
    <text evidence="1">Heterohexamer, formed by a dimer of trimers. The hexameric TusBCD complex contains 2 copies each of TusB, TusC and TusD. The TusBCD complex interacts with TusE.</text>
</comment>
<comment type="subcellular location">
    <subcellularLocation>
        <location evidence="1">Cytoplasm</location>
    </subcellularLocation>
</comment>
<comment type="similarity">
    <text evidence="1">Belongs to the DsrF/TusC family.</text>
</comment>
<accession>B7UK54</accession>
<organism>
    <name type="scientific">Escherichia coli O127:H6 (strain E2348/69 / EPEC)</name>
    <dbReference type="NCBI Taxonomy" id="574521"/>
    <lineage>
        <taxon>Bacteria</taxon>
        <taxon>Pseudomonadati</taxon>
        <taxon>Pseudomonadota</taxon>
        <taxon>Gammaproteobacteria</taxon>
        <taxon>Enterobacterales</taxon>
        <taxon>Enterobacteriaceae</taxon>
        <taxon>Escherichia</taxon>
    </lineage>
</organism>
<gene>
    <name evidence="1" type="primary">tusC</name>
    <name type="ordered locus">E2348C_3593</name>
</gene>
<sequence length="119" mass="13029">MKRIAFVFSTAPHGTTAGREGLDALLATSALTDDLAVFFIADGVFQLLPGQKPDAVLARDYIATFKLLGLYDIEQCWICAASLRERGLDPQTPFVVEATPLEADALRRELANCDVILRF</sequence>